<gene>
    <name type="primary">Ctps2</name>
</gene>
<comment type="function">
    <text evidence="1">Catalyzes the ATP-dependent amination of UTP to CTP with either L-glutamine or ammonia as the source of nitrogen. Constitutes the rate-limiting enzyme in the synthesis of cytosine nucleotides (By similarity).</text>
</comment>
<comment type="catalytic activity">
    <reaction>
        <text>UTP + L-glutamine + ATP + H2O = CTP + L-glutamate + ADP + phosphate + 2 H(+)</text>
        <dbReference type="Rhea" id="RHEA:26426"/>
        <dbReference type="ChEBI" id="CHEBI:15377"/>
        <dbReference type="ChEBI" id="CHEBI:15378"/>
        <dbReference type="ChEBI" id="CHEBI:29985"/>
        <dbReference type="ChEBI" id="CHEBI:30616"/>
        <dbReference type="ChEBI" id="CHEBI:37563"/>
        <dbReference type="ChEBI" id="CHEBI:43474"/>
        <dbReference type="ChEBI" id="CHEBI:46398"/>
        <dbReference type="ChEBI" id="CHEBI:58359"/>
        <dbReference type="ChEBI" id="CHEBI:456216"/>
        <dbReference type="EC" id="6.3.4.2"/>
    </reaction>
</comment>
<comment type="pathway">
    <text>Pyrimidine metabolism; CTP biosynthesis via de novo pathway; CTP from UDP: step 2/2.</text>
</comment>
<comment type="similarity">
    <text evidence="2">Belongs to the CTP synthase family.</text>
</comment>
<feature type="chain" id="PRO_0000247035" description="CTP synthase 2">
    <location>
        <begin position="1"/>
        <end position="586"/>
    </location>
</feature>
<feature type="domain" description="Glutamine amidotransferase type-1">
    <location>
        <begin position="300"/>
        <end position="554"/>
    </location>
</feature>
<feature type="active site" description="For GATase activity" evidence="1">
    <location>
        <position position="399"/>
    </location>
</feature>
<feature type="active site" description="For GATase activity" evidence="1">
    <location>
        <position position="526"/>
    </location>
</feature>
<feature type="active site" description="For GATase activity" evidence="1">
    <location>
        <position position="528"/>
    </location>
</feature>
<feature type="modified residue" description="Phosphoserine" evidence="3">
    <location>
        <position position="568"/>
    </location>
</feature>
<feature type="modified residue" description="Phosphoserine" evidence="3">
    <location>
        <position position="571"/>
    </location>
</feature>
<feature type="modified residue" description="Phosphoserine" evidence="3">
    <location>
        <position position="574"/>
    </location>
</feature>
<dbReference type="EC" id="6.3.4.2"/>
<dbReference type="EMBL" id="BC085949">
    <property type="protein sequence ID" value="AAH85949.1"/>
    <property type="molecule type" value="mRNA"/>
</dbReference>
<dbReference type="EMBL" id="BC085358">
    <property type="protein sequence ID" value="AAH85358.1"/>
    <property type="molecule type" value="mRNA"/>
</dbReference>
<dbReference type="RefSeq" id="NP_001030170.1">
    <property type="nucleotide sequence ID" value="NM_001034998.2"/>
</dbReference>
<dbReference type="RefSeq" id="XP_006256958.1">
    <property type="nucleotide sequence ID" value="XM_006256896.4"/>
</dbReference>
<dbReference type="RefSeq" id="XP_006256959.1">
    <property type="nucleotide sequence ID" value="XM_006256897.5"/>
</dbReference>
<dbReference type="RefSeq" id="XP_006256960.1">
    <property type="nucleotide sequence ID" value="XM_006256898.4"/>
</dbReference>
<dbReference type="RefSeq" id="XP_006256961.1">
    <property type="nucleotide sequence ID" value="XM_006256899.5"/>
</dbReference>
<dbReference type="RefSeq" id="XP_006256962.1">
    <property type="nucleotide sequence ID" value="XM_006256900.3"/>
</dbReference>
<dbReference type="SMR" id="Q5U2N0"/>
<dbReference type="FunCoup" id="Q5U2N0">
    <property type="interactions" value="2234"/>
</dbReference>
<dbReference type="STRING" id="10116.ENSRNOP00000055810"/>
<dbReference type="BindingDB" id="Q5U2N0"/>
<dbReference type="ChEMBL" id="CHEMBL5291535"/>
<dbReference type="GuidetoPHARMACOLOGY" id="3216"/>
<dbReference type="MEROPS" id="C26.964"/>
<dbReference type="iPTMnet" id="Q5U2N0"/>
<dbReference type="PhosphoSitePlus" id="Q5U2N0"/>
<dbReference type="jPOST" id="Q5U2N0"/>
<dbReference type="PaxDb" id="10116-ENSRNOP00000055810"/>
<dbReference type="GeneID" id="619580"/>
<dbReference type="KEGG" id="rno:619580"/>
<dbReference type="UCSC" id="RGD:1563369">
    <property type="organism name" value="rat"/>
</dbReference>
<dbReference type="AGR" id="RGD:1563369"/>
<dbReference type="CTD" id="56474"/>
<dbReference type="RGD" id="1563369">
    <property type="gene designation" value="Ctps2"/>
</dbReference>
<dbReference type="VEuPathDB" id="HostDB:ENSRNOG00000004257"/>
<dbReference type="eggNOG" id="KOG2387">
    <property type="taxonomic scope" value="Eukaryota"/>
</dbReference>
<dbReference type="HOGENOM" id="CLU_011675_5_0_1"/>
<dbReference type="InParanoid" id="Q5U2N0"/>
<dbReference type="OrthoDB" id="82348at9989"/>
<dbReference type="PhylomeDB" id="Q5U2N0"/>
<dbReference type="TreeFam" id="TF300379"/>
<dbReference type="Reactome" id="R-RNO-499943">
    <property type="pathway name" value="Interconversion of nucleotide di- and triphosphates"/>
</dbReference>
<dbReference type="UniPathway" id="UPA00159">
    <property type="reaction ID" value="UER00277"/>
</dbReference>
<dbReference type="PRO" id="PR:Q5U2N0"/>
<dbReference type="Proteomes" id="UP000002494">
    <property type="component" value="Chromosome X"/>
</dbReference>
<dbReference type="Bgee" id="ENSRNOG00000004257">
    <property type="expression patterns" value="Expressed in pancreas and 20 other cell types or tissues"/>
</dbReference>
<dbReference type="GO" id="GO:0097268">
    <property type="term" value="C:cytoophidium"/>
    <property type="evidence" value="ECO:0000318"/>
    <property type="project" value="GO_Central"/>
</dbReference>
<dbReference type="GO" id="GO:0005737">
    <property type="term" value="C:cytoplasm"/>
    <property type="evidence" value="ECO:0000318"/>
    <property type="project" value="GO_Central"/>
</dbReference>
<dbReference type="GO" id="GO:0005524">
    <property type="term" value="F:ATP binding"/>
    <property type="evidence" value="ECO:0007669"/>
    <property type="project" value="UniProtKB-KW"/>
</dbReference>
<dbReference type="GO" id="GO:0003883">
    <property type="term" value="F:CTP synthase activity"/>
    <property type="evidence" value="ECO:0000318"/>
    <property type="project" value="GO_Central"/>
</dbReference>
<dbReference type="GO" id="GO:0042802">
    <property type="term" value="F:identical protein binding"/>
    <property type="evidence" value="ECO:0000266"/>
    <property type="project" value="RGD"/>
</dbReference>
<dbReference type="GO" id="GO:0044210">
    <property type="term" value="P:'de novo' CTP biosynthetic process"/>
    <property type="evidence" value="ECO:0007669"/>
    <property type="project" value="UniProtKB-UniPathway"/>
</dbReference>
<dbReference type="GO" id="GO:0006241">
    <property type="term" value="P:CTP biosynthetic process"/>
    <property type="evidence" value="ECO:0000318"/>
    <property type="project" value="GO_Central"/>
</dbReference>
<dbReference type="GO" id="GO:0019856">
    <property type="term" value="P:pyrimidine nucleobase biosynthetic process"/>
    <property type="evidence" value="ECO:0000318"/>
    <property type="project" value="GO_Central"/>
</dbReference>
<dbReference type="CDD" id="cd03113">
    <property type="entry name" value="CTPS_N"/>
    <property type="match status" value="1"/>
</dbReference>
<dbReference type="CDD" id="cd01746">
    <property type="entry name" value="GATase1_CTP_Synthase"/>
    <property type="match status" value="1"/>
</dbReference>
<dbReference type="FunFam" id="3.40.50.300:FF:000207">
    <property type="entry name" value="CTP synthase"/>
    <property type="match status" value="1"/>
</dbReference>
<dbReference type="FunFam" id="3.40.50.880:FF:000005">
    <property type="entry name" value="CTP synthase"/>
    <property type="match status" value="1"/>
</dbReference>
<dbReference type="Gene3D" id="3.40.50.880">
    <property type="match status" value="1"/>
</dbReference>
<dbReference type="Gene3D" id="3.40.50.300">
    <property type="entry name" value="P-loop containing nucleotide triphosphate hydrolases"/>
    <property type="match status" value="1"/>
</dbReference>
<dbReference type="HAMAP" id="MF_01227">
    <property type="entry name" value="PyrG"/>
    <property type="match status" value="1"/>
</dbReference>
<dbReference type="InterPro" id="IPR029062">
    <property type="entry name" value="Class_I_gatase-like"/>
</dbReference>
<dbReference type="InterPro" id="IPR004468">
    <property type="entry name" value="CTP_synthase"/>
</dbReference>
<dbReference type="InterPro" id="IPR017456">
    <property type="entry name" value="CTP_synthase_N"/>
</dbReference>
<dbReference type="InterPro" id="IPR017926">
    <property type="entry name" value="GATASE"/>
</dbReference>
<dbReference type="InterPro" id="IPR033828">
    <property type="entry name" value="GATase1_CTP_Synthase"/>
</dbReference>
<dbReference type="InterPro" id="IPR027417">
    <property type="entry name" value="P-loop_NTPase"/>
</dbReference>
<dbReference type="NCBIfam" id="NF003792">
    <property type="entry name" value="PRK05380.1"/>
    <property type="match status" value="1"/>
</dbReference>
<dbReference type="NCBIfam" id="TIGR00337">
    <property type="entry name" value="PyrG"/>
    <property type="match status" value="1"/>
</dbReference>
<dbReference type="PANTHER" id="PTHR11550">
    <property type="entry name" value="CTP SYNTHASE"/>
    <property type="match status" value="1"/>
</dbReference>
<dbReference type="PANTHER" id="PTHR11550:SF2">
    <property type="entry name" value="CTP SYNTHASE 2"/>
    <property type="match status" value="1"/>
</dbReference>
<dbReference type="Pfam" id="PF06418">
    <property type="entry name" value="CTP_synth_N"/>
    <property type="match status" value="1"/>
</dbReference>
<dbReference type="Pfam" id="PF00117">
    <property type="entry name" value="GATase"/>
    <property type="match status" value="1"/>
</dbReference>
<dbReference type="SUPFAM" id="SSF52317">
    <property type="entry name" value="Class I glutamine amidotransferase-like"/>
    <property type="match status" value="1"/>
</dbReference>
<dbReference type="SUPFAM" id="SSF52540">
    <property type="entry name" value="P-loop containing nucleoside triphosphate hydrolases"/>
    <property type="match status" value="1"/>
</dbReference>
<dbReference type="PROSITE" id="PS51273">
    <property type="entry name" value="GATASE_TYPE_1"/>
    <property type="match status" value="1"/>
</dbReference>
<keyword id="KW-0067">ATP-binding</keyword>
<keyword id="KW-0315">Glutamine amidotransferase</keyword>
<keyword id="KW-0436">Ligase</keyword>
<keyword id="KW-0547">Nucleotide-binding</keyword>
<keyword id="KW-0597">Phosphoprotein</keyword>
<keyword id="KW-0665">Pyrimidine biosynthesis</keyword>
<keyword id="KW-1185">Reference proteome</keyword>
<proteinExistence type="evidence at protein level"/>
<name>PYRG2_RAT</name>
<reference key="1">
    <citation type="journal article" date="2004" name="Genome Res.">
        <title>The status, quality, and expansion of the NIH full-length cDNA project: the Mammalian Gene Collection (MGC).</title>
        <authorList>
            <consortium name="The MGC Project Team"/>
        </authorList>
    </citation>
    <scope>NUCLEOTIDE SEQUENCE [LARGE SCALE MRNA]</scope>
    <source>
        <tissue>Ovary</tissue>
        <tissue>Testis</tissue>
    </source>
</reference>
<reference key="2">
    <citation type="journal article" date="2012" name="Nat. Commun.">
        <title>Quantitative maps of protein phosphorylation sites across 14 different rat organs and tissues.</title>
        <authorList>
            <person name="Lundby A."/>
            <person name="Secher A."/>
            <person name="Lage K."/>
            <person name="Nordsborg N.B."/>
            <person name="Dmytriyev A."/>
            <person name="Lundby C."/>
            <person name="Olsen J.V."/>
        </authorList>
    </citation>
    <scope>PHOSPHORYLATION [LARGE SCALE ANALYSIS] AT SER-568; SER-571 AND SER-574</scope>
    <scope>IDENTIFICATION BY MASS SPECTROMETRY [LARGE SCALE ANALYSIS]</scope>
</reference>
<organism>
    <name type="scientific">Rattus norvegicus</name>
    <name type="common">Rat</name>
    <dbReference type="NCBI Taxonomy" id="10116"/>
    <lineage>
        <taxon>Eukaryota</taxon>
        <taxon>Metazoa</taxon>
        <taxon>Chordata</taxon>
        <taxon>Craniata</taxon>
        <taxon>Vertebrata</taxon>
        <taxon>Euteleostomi</taxon>
        <taxon>Mammalia</taxon>
        <taxon>Eutheria</taxon>
        <taxon>Euarchontoglires</taxon>
        <taxon>Glires</taxon>
        <taxon>Rodentia</taxon>
        <taxon>Myomorpha</taxon>
        <taxon>Muroidea</taxon>
        <taxon>Muridae</taxon>
        <taxon>Murinae</taxon>
        <taxon>Rattus</taxon>
    </lineage>
</organism>
<protein>
    <recommendedName>
        <fullName>CTP synthase 2</fullName>
        <ecNumber>6.3.4.2</ecNumber>
    </recommendedName>
    <alternativeName>
        <fullName>CTP synthetase 2</fullName>
    </alternativeName>
    <alternativeName>
        <fullName>UTP--ammonia ligase 2</fullName>
    </alternativeName>
</protein>
<sequence length="586" mass="65674">MKYILVTGGVISGIGKGIIASSIGTILKSCGLRVTAIKIDPYINIDAGTFSPYEHGEVFVLNDGGEVDLDLGNYERFLDINLYKDNNITTGKIYQHVINKERRGDYLGKTVQVVPHITDAIQDWVMNQAKVSVDGNKEDPQICVIELGGTIGDIEGMAFVEAFRQFQFKAKRENFYNIHVSLVPQPSATGEQKTKPTQNSVRALRGLGLSPDLIVCRSSTPIEMAVKEKISMFCHVNPEQVICIHDVSSIYRVPLLLEEQGVVKYFQERLDLPINDCSNNLLFKWKTMADRYERLQKICSIALVGKYTKLRDCYASVFKALEHSALAINHKLNLMYIDSIDLEPVTKAEDPVKFHEAWQKLCLADGILVPGGFGIRGTLGKLQAISWARTKKIPFLGICLGMQLAVIEFARNCLNLKDANSTEFDPNTPVPLVIDMPEHNPGDLGGTMRLGLRRTVFTTENSILKKLYGDVPYIEERHRHRYEVNPNLINQFENKDLCFVGEDVDGKRMEIIELTGHPYFIGVQFHPEFSSRPMKPSPPYLGLLLAATGTLNTHLQQMSKLSYSDIYSDASDDSFSEAKFAELDIN</sequence>
<accession>Q5U2N0</accession>
<accession>Q5U3X4</accession>
<evidence type="ECO:0000250" key="1"/>
<evidence type="ECO:0000305" key="2"/>
<evidence type="ECO:0007744" key="3">
    <source>
    </source>
</evidence>